<proteinExistence type="inferred from homology"/>
<protein>
    <recommendedName>
        <fullName evidence="1">Small ribosomal subunit protein uS8</fullName>
    </recommendedName>
    <alternativeName>
        <fullName evidence="2">30S ribosomal protein S8</fullName>
    </alternativeName>
</protein>
<accession>Q8EK55</accession>
<reference key="1">
    <citation type="journal article" date="2002" name="Nat. Biotechnol.">
        <title>Genome sequence of the dissimilatory metal ion-reducing bacterium Shewanella oneidensis.</title>
        <authorList>
            <person name="Heidelberg J.F."/>
            <person name="Paulsen I.T."/>
            <person name="Nelson K.E."/>
            <person name="Gaidos E.J."/>
            <person name="Nelson W.C."/>
            <person name="Read T.D."/>
            <person name="Eisen J.A."/>
            <person name="Seshadri R."/>
            <person name="Ward N.L."/>
            <person name="Methe B.A."/>
            <person name="Clayton R.A."/>
            <person name="Meyer T."/>
            <person name="Tsapin A."/>
            <person name="Scott J."/>
            <person name="Beanan M.J."/>
            <person name="Brinkac L.M."/>
            <person name="Daugherty S.C."/>
            <person name="DeBoy R.T."/>
            <person name="Dodson R.J."/>
            <person name="Durkin A.S."/>
            <person name="Haft D.H."/>
            <person name="Kolonay J.F."/>
            <person name="Madupu R."/>
            <person name="Peterson J.D."/>
            <person name="Umayam L.A."/>
            <person name="White O."/>
            <person name="Wolf A.M."/>
            <person name="Vamathevan J.J."/>
            <person name="Weidman J.F."/>
            <person name="Impraim M."/>
            <person name="Lee K."/>
            <person name="Berry K.J."/>
            <person name="Lee C."/>
            <person name="Mueller J."/>
            <person name="Khouri H.M."/>
            <person name="Gill J."/>
            <person name="Utterback T.R."/>
            <person name="McDonald L.A."/>
            <person name="Feldblyum T.V."/>
            <person name="Smith H.O."/>
            <person name="Venter J.C."/>
            <person name="Nealson K.H."/>
            <person name="Fraser C.M."/>
        </authorList>
    </citation>
    <scope>NUCLEOTIDE SEQUENCE [LARGE SCALE GENOMIC DNA]</scope>
    <source>
        <strain>ATCC 700550 / JCM 31522 / CIP 106686 / LMG 19005 / NCIMB 14063 / MR-1</strain>
    </source>
</reference>
<sequence>MSMQDPIADMLTRIRNGQAANKVSVKMPSAKLKVAIAKLLKEEGYIADYAVADEAKPELEITLKYFQGQPVVETIQRVSRPGLRIYKGKNELPKVMGGLGVAIVSTSKGLMTDRAARLAGMGGEVICYVA</sequence>
<dbReference type="EMBL" id="AE014299">
    <property type="protein sequence ID" value="AAN53330.1"/>
    <property type="molecule type" value="Genomic_DNA"/>
</dbReference>
<dbReference type="RefSeq" id="NP_715885.1">
    <property type="nucleotide sequence ID" value="NC_004347.2"/>
</dbReference>
<dbReference type="RefSeq" id="WP_007644434.1">
    <property type="nucleotide sequence ID" value="NZ_CP053946.1"/>
</dbReference>
<dbReference type="SMR" id="Q8EK55"/>
<dbReference type="STRING" id="211586.SO_0245"/>
<dbReference type="PaxDb" id="211586-SO_0245"/>
<dbReference type="GeneID" id="94726200"/>
<dbReference type="KEGG" id="son:SO_0245"/>
<dbReference type="PATRIC" id="fig|211586.12.peg.233"/>
<dbReference type="eggNOG" id="COG0096">
    <property type="taxonomic scope" value="Bacteria"/>
</dbReference>
<dbReference type="HOGENOM" id="CLU_098428_0_0_6"/>
<dbReference type="OrthoDB" id="9802617at2"/>
<dbReference type="PhylomeDB" id="Q8EK55"/>
<dbReference type="BioCyc" id="SONE211586:G1GMP-234-MONOMER"/>
<dbReference type="Proteomes" id="UP000008186">
    <property type="component" value="Chromosome"/>
</dbReference>
<dbReference type="GO" id="GO:0022627">
    <property type="term" value="C:cytosolic small ribosomal subunit"/>
    <property type="evidence" value="ECO:0000318"/>
    <property type="project" value="GO_Central"/>
</dbReference>
<dbReference type="GO" id="GO:0019843">
    <property type="term" value="F:rRNA binding"/>
    <property type="evidence" value="ECO:0007669"/>
    <property type="project" value="UniProtKB-UniRule"/>
</dbReference>
<dbReference type="GO" id="GO:0003735">
    <property type="term" value="F:structural constituent of ribosome"/>
    <property type="evidence" value="ECO:0000318"/>
    <property type="project" value="GO_Central"/>
</dbReference>
<dbReference type="GO" id="GO:0006412">
    <property type="term" value="P:translation"/>
    <property type="evidence" value="ECO:0007669"/>
    <property type="project" value="UniProtKB-UniRule"/>
</dbReference>
<dbReference type="FunFam" id="3.30.1370.30:FF:000003">
    <property type="entry name" value="30S ribosomal protein S8"/>
    <property type="match status" value="1"/>
</dbReference>
<dbReference type="FunFam" id="3.30.1490.10:FF:000001">
    <property type="entry name" value="30S ribosomal protein S8"/>
    <property type="match status" value="1"/>
</dbReference>
<dbReference type="Gene3D" id="3.30.1370.30">
    <property type="match status" value="1"/>
</dbReference>
<dbReference type="Gene3D" id="3.30.1490.10">
    <property type="match status" value="1"/>
</dbReference>
<dbReference type="HAMAP" id="MF_01302_B">
    <property type="entry name" value="Ribosomal_uS8_B"/>
    <property type="match status" value="1"/>
</dbReference>
<dbReference type="InterPro" id="IPR000630">
    <property type="entry name" value="Ribosomal_uS8"/>
</dbReference>
<dbReference type="InterPro" id="IPR047863">
    <property type="entry name" value="Ribosomal_uS8_CS"/>
</dbReference>
<dbReference type="InterPro" id="IPR035987">
    <property type="entry name" value="Ribosomal_uS8_sf"/>
</dbReference>
<dbReference type="NCBIfam" id="NF001109">
    <property type="entry name" value="PRK00136.1"/>
    <property type="match status" value="1"/>
</dbReference>
<dbReference type="PANTHER" id="PTHR11758">
    <property type="entry name" value="40S RIBOSOMAL PROTEIN S15A"/>
    <property type="match status" value="1"/>
</dbReference>
<dbReference type="Pfam" id="PF00410">
    <property type="entry name" value="Ribosomal_S8"/>
    <property type="match status" value="1"/>
</dbReference>
<dbReference type="SUPFAM" id="SSF56047">
    <property type="entry name" value="Ribosomal protein S8"/>
    <property type="match status" value="1"/>
</dbReference>
<dbReference type="PROSITE" id="PS00053">
    <property type="entry name" value="RIBOSOMAL_S8"/>
    <property type="match status" value="1"/>
</dbReference>
<organism>
    <name type="scientific">Shewanella oneidensis (strain ATCC 700550 / JCM 31522 / CIP 106686 / LMG 19005 / NCIMB 14063 / MR-1)</name>
    <dbReference type="NCBI Taxonomy" id="211586"/>
    <lineage>
        <taxon>Bacteria</taxon>
        <taxon>Pseudomonadati</taxon>
        <taxon>Pseudomonadota</taxon>
        <taxon>Gammaproteobacteria</taxon>
        <taxon>Alteromonadales</taxon>
        <taxon>Shewanellaceae</taxon>
        <taxon>Shewanella</taxon>
    </lineage>
</organism>
<evidence type="ECO:0000255" key="1">
    <source>
        <dbReference type="HAMAP-Rule" id="MF_01302"/>
    </source>
</evidence>
<evidence type="ECO:0000305" key="2"/>
<keyword id="KW-1185">Reference proteome</keyword>
<keyword id="KW-0687">Ribonucleoprotein</keyword>
<keyword id="KW-0689">Ribosomal protein</keyword>
<keyword id="KW-0694">RNA-binding</keyword>
<keyword id="KW-0699">rRNA-binding</keyword>
<comment type="function">
    <text evidence="1">One of the primary rRNA binding proteins, it binds directly to 16S rRNA central domain where it helps coordinate assembly of the platform of the 30S subunit.</text>
</comment>
<comment type="subunit">
    <text evidence="1">Part of the 30S ribosomal subunit. Contacts proteins S5 and S12.</text>
</comment>
<comment type="similarity">
    <text evidence="1">Belongs to the universal ribosomal protein uS8 family.</text>
</comment>
<name>RS8_SHEON</name>
<feature type="chain" id="PRO_0000126480" description="Small ribosomal subunit protein uS8">
    <location>
        <begin position="1"/>
        <end position="130"/>
    </location>
</feature>
<gene>
    <name evidence="1" type="primary">rpsH</name>
    <name type="ordered locus">SO_0245</name>
</gene>